<dbReference type="EMBL" id="CP000848">
    <property type="protein sequence ID" value="ABV76585.1"/>
    <property type="molecule type" value="Genomic_DNA"/>
</dbReference>
<dbReference type="RefSeq" id="WP_012151147.1">
    <property type="nucleotide sequence ID" value="NZ_CP121767.1"/>
</dbReference>
<dbReference type="SMR" id="A8GT60"/>
<dbReference type="GeneID" id="79937661"/>
<dbReference type="KEGG" id="rri:A1G_05510"/>
<dbReference type="HOGENOM" id="CLU_073626_1_1_5"/>
<dbReference type="Proteomes" id="UP000006832">
    <property type="component" value="Chromosome"/>
</dbReference>
<dbReference type="GO" id="GO:0022627">
    <property type="term" value="C:cytosolic small ribosomal subunit"/>
    <property type="evidence" value="ECO:0007669"/>
    <property type="project" value="TreeGrafter"/>
</dbReference>
<dbReference type="GO" id="GO:0019843">
    <property type="term" value="F:rRNA binding"/>
    <property type="evidence" value="ECO:0007669"/>
    <property type="project" value="UniProtKB-UniRule"/>
</dbReference>
<dbReference type="GO" id="GO:0003735">
    <property type="term" value="F:structural constituent of ribosome"/>
    <property type="evidence" value="ECO:0007669"/>
    <property type="project" value="InterPro"/>
</dbReference>
<dbReference type="GO" id="GO:0006412">
    <property type="term" value="P:translation"/>
    <property type="evidence" value="ECO:0007669"/>
    <property type="project" value="UniProtKB-UniRule"/>
</dbReference>
<dbReference type="CDD" id="cd00364">
    <property type="entry name" value="Ribosomal_uS17"/>
    <property type="match status" value="1"/>
</dbReference>
<dbReference type="Gene3D" id="2.40.50.140">
    <property type="entry name" value="Nucleic acid-binding proteins"/>
    <property type="match status" value="1"/>
</dbReference>
<dbReference type="HAMAP" id="MF_01345_B">
    <property type="entry name" value="Ribosomal_uS17_B"/>
    <property type="match status" value="1"/>
</dbReference>
<dbReference type="InterPro" id="IPR012340">
    <property type="entry name" value="NA-bd_OB-fold"/>
</dbReference>
<dbReference type="InterPro" id="IPR000266">
    <property type="entry name" value="Ribosomal_uS17"/>
</dbReference>
<dbReference type="InterPro" id="IPR019984">
    <property type="entry name" value="Ribosomal_uS17_bact/chlr"/>
</dbReference>
<dbReference type="InterPro" id="IPR019979">
    <property type="entry name" value="Ribosomal_uS17_CS"/>
</dbReference>
<dbReference type="NCBIfam" id="NF004123">
    <property type="entry name" value="PRK05610.1"/>
    <property type="match status" value="1"/>
</dbReference>
<dbReference type="NCBIfam" id="TIGR03635">
    <property type="entry name" value="uS17_bact"/>
    <property type="match status" value="1"/>
</dbReference>
<dbReference type="PANTHER" id="PTHR10744">
    <property type="entry name" value="40S RIBOSOMAL PROTEIN S11 FAMILY MEMBER"/>
    <property type="match status" value="1"/>
</dbReference>
<dbReference type="PANTHER" id="PTHR10744:SF1">
    <property type="entry name" value="SMALL RIBOSOMAL SUBUNIT PROTEIN US17M"/>
    <property type="match status" value="1"/>
</dbReference>
<dbReference type="Pfam" id="PF00366">
    <property type="entry name" value="Ribosomal_S17"/>
    <property type="match status" value="1"/>
</dbReference>
<dbReference type="PRINTS" id="PR00973">
    <property type="entry name" value="RIBOSOMALS17"/>
</dbReference>
<dbReference type="SUPFAM" id="SSF50249">
    <property type="entry name" value="Nucleic acid-binding proteins"/>
    <property type="match status" value="1"/>
</dbReference>
<dbReference type="PROSITE" id="PS00056">
    <property type="entry name" value="RIBOSOMAL_S17"/>
    <property type="match status" value="1"/>
</dbReference>
<proteinExistence type="inferred from homology"/>
<gene>
    <name evidence="1" type="primary">rpsQ</name>
    <name type="ordered locus">A1G_05510</name>
</gene>
<accession>A8GT60</accession>
<feature type="chain" id="PRO_1000055012" description="Small ribosomal subunit protein uS17">
    <location>
        <begin position="1"/>
        <end position="77"/>
    </location>
</feature>
<evidence type="ECO:0000255" key="1">
    <source>
        <dbReference type="HAMAP-Rule" id="MF_01345"/>
    </source>
</evidence>
<evidence type="ECO:0000305" key="2"/>
<keyword id="KW-0687">Ribonucleoprotein</keyword>
<keyword id="KW-0689">Ribosomal protein</keyword>
<keyword id="KW-0694">RNA-binding</keyword>
<keyword id="KW-0699">rRNA-binding</keyword>
<sequence>MPKRLLQGVVISSKADKTVTVKVERKFKHPIYKKFVKVSKKYAAHDSENKYQEGDKVSIIESRPISKTKTWVVVNGE</sequence>
<organism>
    <name type="scientific">Rickettsia rickettsii (strain Sheila Smith)</name>
    <dbReference type="NCBI Taxonomy" id="392021"/>
    <lineage>
        <taxon>Bacteria</taxon>
        <taxon>Pseudomonadati</taxon>
        <taxon>Pseudomonadota</taxon>
        <taxon>Alphaproteobacteria</taxon>
        <taxon>Rickettsiales</taxon>
        <taxon>Rickettsiaceae</taxon>
        <taxon>Rickettsieae</taxon>
        <taxon>Rickettsia</taxon>
        <taxon>spotted fever group</taxon>
    </lineage>
</organism>
<name>RS17_RICRS</name>
<reference key="1">
    <citation type="submission" date="2007-09" db="EMBL/GenBank/DDBJ databases">
        <title>Complete genome sequence of Rickettsia rickettsii.</title>
        <authorList>
            <person name="Madan A."/>
            <person name="Fahey J."/>
            <person name="Helton E."/>
            <person name="Ketteman M."/>
            <person name="Madan A."/>
            <person name="Rodrigues S."/>
            <person name="Sanchez A."/>
            <person name="Dasch G."/>
            <person name="Eremeeva M."/>
        </authorList>
    </citation>
    <scope>NUCLEOTIDE SEQUENCE [LARGE SCALE GENOMIC DNA]</scope>
    <source>
        <strain>Sheila Smith</strain>
    </source>
</reference>
<protein>
    <recommendedName>
        <fullName evidence="1">Small ribosomal subunit protein uS17</fullName>
    </recommendedName>
    <alternativeName>
        <fullName evidence="2">30S ribosomal protein S17</fullName>
    </alternativeName>
</protein>
<comment type="function">
    <text evidence="1">One of the primary rRNA binding proteins, it binds specifically to the 5'-end of 16S ribosomal RNA.</text>
</comment>
<comment type="subunit">
    <text evidence="1">Part of the 30S ribosomal subunit.</text>
</comment>
<comment type="similarity">
    <text evidence="1">Belongs to the universal ribosomal protein uS17 family.</text>
</comment>